<protein>
    <recommendedName>
        <fullName>ATP synthase subunit b 2</fullName>
    </recommendedName>
    <alternativeName>
        <fullName>ATP synthase F(0) sector subunit b 2</fullName>
    </alternativeName>
    <alternativeName>
        <fullName>ATPase subunit I 2</fullName>
    </alternativeName>
    <alternativeName>
        <fullName>F-type ATPase subunit b 2</fullName>
        <shortName>F-ATPase subunit b 2</shortName>
    </alternativeName>
</protein>
<dbReference type="EMBL" id="CP000133">
    <property type="protein sequence ID" value="ABC89677.1"/>
    <property type="molecule type" value="Genomic_DNA"/>
</dbReference>
<dbReference type="RefSeq" id="WP_011424214.1">
    <property type="nucleotide sequence ID" value="NC_007761.1"/>
</dbReference>
<dbReference type="SMR" id="Q2KBV9"/>
<dbReference type="KEGG" id="ret:RHE_CH00866"/>
<dbReference type="eggNOG" id="COG0711">
    <property type="taxonomic scope" value="Bacteria"/>
</dbReference>
<dbReference type="HOGENOM" id="CLU_079215_1_2_5"/>
<dbReference type="OrthoDB" id="9805716at2"/>
<dbReference type="Proteomes" id="UP000001936">
    <property type="component" value="Chromosome"/>
</dbReference>
<dbReference type="GO" id="GO:0005886">
    <property type="term" value="C:plasma membrane"/>
    <property type="evidence" value="ECO:0007669"/>
    <property type="project" value="UniProtKB-SubCell"/>
</dbReference>
<dbReference type="GO" id="GO:0045259">
    <property type="term" value="C:proton-transporting ATP synthase complex"/>
    <property type="evidence" value="ECO:0007669"/>
    <property type="project" value="UniProtKB-KW"/>
</dbReference>
<dbReference type="GO" id="GO:0046933">
    <property type="term" value="F:proton-transporting ATP synthase activity, rotational mechanism"/>
    <property type="evidence" value="ECO:0007669"/>
    <property type="project" value="UniProtKB-UniRule"/>
</dbReference>
<dbReference type="GO" id="GO:0046961">
    <property type="term" value="F:proton-transporting ATPase activity, rotational mechanism"/>
    <property type="evidence" value="ECO:0007669"/>
    <property type="project" value="TreeGrafter"/>
</dbReference>
<dbReference type="CDD" id="cd06503">
    <property type="entry name" value="ATP-synt_Fo_b"/>
    <property type="match status" value="1"/>
</dbReference>
<dbReference type="HAMAP" id="MF_01398">
    <property type="entry name" value="ATP_synth_b_bprime"/>
    <property type="match status" value="1"/>
</dbReference>
<dbReference type="InterPro" id="IPR002146">
    <property type="entry name" value="ATP_synth_b/b'su_bac/chlpt"/>
</dbReference>
<dbReference type="InterPro" id="IPR050059">
    <property type="entry name" value="ATP_synthase_B_chain"/>
</dbReference>
<dbReference type="NCBIfam" id="NF006612">
    <property type="entry name" value="PRK09174.1"/>
    <property type="match status" value="1"/>
</dbReference>
<dbReference type="PANTHER" id="PTHR33445:SF1">
    <property type="entry name" value="ATP SYNTHASE SUBUNIT B"/>
    <property type="match status" value="1"/>
</dbReference>
<dbReference type="PANTHER" id="PTHR33445">
    <property type="entry name" value="ATP SYNTHASE SUBUNIT B', CHLOROPLASTIC"/>
    <property type="match status" value="1"/>
</dbReference>
<dbReference type="Pfam" id="PF00430">
    <property type="entry name" value="ATP-synt_B"/>
    <property type="match status" value="1"/>
</dbReference>
<sequence>MFFVTPAYAEEAPAAATGTDAHAAPAAGEVHTETGVAEGEHARGPFPPFDSTTYASQLLWLVITFGVFYLLMQKVIAPRIGAILDQRHKRISQDLEEAGRLKAEADAAVQTYEGELAAARAKSHAIGSAARDAAKVKAEEDRRTVEASLSEKIKAAEARIADIKAKAFADVGTIAEETAAAVVEQLIGSTAAQADVAAAVAAAKKEV</sequence>
<comment type="function">
    <text evidence="1">F(1)F(0) ATP synthase produces ATP from ADP in the presence of a proton or sodium gradient. F-type ATPases consist of two structural domains, F(1) containing the extramembraneous catalytic core and F(0) containing the membrane proton channel, linked together by a central stalk and a peripheral stalk. During catalysis, ATP synthesis in the catalytic domain of F(1) is coupled via a rotary mechanism of the central stalk subunits to proton translocation (By similarity).</text>
</comment>
<comment type="function">
    <text evidence="1">Component of the F(0) channel, it forms part of the peripheral stalk, linking F(1) to F(0). The b'-subunit is a diverged and duplicated form of b found in plants and photosynthetic bacteria (By similarity).</text>
</comment>
<comment type="subunit">
    <text evidence="1">F-type ATPases have 2 components, F(1) - the catalytic core - and F(0) - the membrane proton channel. F(1) has five subunits: alpha(3), beta(3), gamma(1), delta(1), epsilon(1). F(0) has three main subunits: a(1), b(2) and c(10-14). The alpha and beta chains form an alternating ring which encloses part of the gamma chain. F(1) is attached to F(0) by a central stalk formed by the gamma and epsilon chains, while a peripheral stalk is formed by the delta and b chains (By similarity).</text>
</comment>
<comment type="subcellular location">
    <subcellularLocation>
        <location evidence="1">Cell inner membrane</location>
        <topology evidence="1">Single-pass membrane protein</topology>
    </subcellularLocation>
</comment>
<comment type="similarity">
    <text evidence="3">Belongs to the ATPase B chain family.</text>
</comment>
<proteinExistence type="inferred from homology"/>
<keyword id="KW-0066">ATP synthesis</keyword>
<keyword id="KW-0997">Cell inner membrane</keyword>
<keyword id="KW-1003">Cell membrane</keyword>
<keyword id="KW-0138">CF(0)</keyword>
<keyword id="KW-0375">Hydrogen ion transport</keyword>
<keyword id="KW-0406">Ion transport</keyword>
<keyword id="KW-0472">Membrane</keyword>
<keyword id="KW-1185">Reference proteome</keyword>
<keyword id="KW-0812">Transmembrane</keyword>
<keyword id="KW-1133">Transmembrane helix</keyword>
<keyword id="KW-0813">Transport</keyword>
<name>ATPF2_RHIEC</name>
<reference key="1">
    <citation type="journal article" date="2006" name="Proc. Natl. Acad. Sci. U.S.A.">
        <title>The partitioned Rhizobium etli genome: genetic and metabolic redundancy in seven interacting replicons.</title>
        <authorList>
            <person name="Gonzalez V."/>
            <person name="Santamaria R.I."/>
            <person name="Bustos P."/>
            <person name="Hernandez-Gonzalez I."/>
            <person name="Medrano-Soto A."/>
            <person name="Moreno-Hagelsieb G."/>
            <person name="Janga S.C."/>
            <person name="Ramirez M.A."/>
            <person name="Jimenez-Jacinto V."/>
            <person name="Collado-Vides J."/>
            <person name="Davila G."/>
        </authorList>
    </citation>
    <scope>NUCLEOTIDE SEQUENCE [LARGE SCALE GENOMIC DNA]</scope>
    <source>
        <strain>ATCC 51251 / DSM 11541 / JCM 21823 / NBRC 15573 / CFN 42</strain>
    </source>
</reference>
<accession>Q2KBV9</accession>
<gene>
    <name type="primary">atpF2</name>
    <name type="synonym">atpG</name>
    <name type="ordered locus">RHE_CH00866</name>
</gene>
<organism>
    <name type="scientific">Rhizobium etli (strain ATCC 51251 / DSM 11541 / JCM 21823 / NBRC 15573 / CFN 42)</name>
    <dbReference type="NCBI Taxonomy" id="347834"/>
    <lineage>
        <taxon>Bacteria</taxon>
        <taxon>Pseudomonadati</taxon>
        <taxon>Pseudomonadota</taxon>
        <taxon>Alphaproteobacteria</taxon>
        <taxon>Hyphomicrobiales</taxon>
        <taxon>Rhizobiaceae</taxon>
        <taxon>Rhizobium/Agrobacterium group</taxon>
        <taxon>Rhizobium</taxon>
    </lineage>
</organism>
<evidence type="ECO:0000250" key="1"/>
<evidence type="ECO:0000255" key="2"/>
<evidence type="ECO:0000305" key="3"/>
<feature type="chain" id="PRO_0000369031" description="ATP synthase subunit b 2">
    <location>
        <begin position="1"/>
        <end position="207"/>
    </location>
</feature>
<feature type="transmembrane region" description="Helical" evidence="2">
    <location>
        <begin position="53"/>
        <end position="72"/>
    </location>
</feature>